<protein>
    <recommendedName>
        <fullName evidence="1">Isocitrate lyase</fullName>
        <shortName evidence="4">ICL</shortName>
        <shortName evidence="4">Isocitrase</shortName>
        <shortName evidence="4">Isocitratase</shortName>
        <ecNumber evidence="1">4.1.3.1</ecNumber>
    </recommendedName>
    <alternativeName>
        <fullName evidence="1">Methylisocitrate lyase</fullName>
        <shortName evidence="4">MICA</shortName>
        <ecNumber evidence="1">4.1.3.30</ecNumber>
    </alternativeName>
    <alternativeName>
        <fullName evidence="4">Threo-D(S)-isocitrate glyoxylate-lyase</fullName>
    </alternativeName>
</protein>
<sequence length="550" mass="61744">MSGPYTKIDLDKEEQDFQNQIKEIEEWWSQPRWAKTKRIYNAEDIAKRRSSLSSVPASNQQAQKLFKLLGEHAKNETASFTFGALDPIHITQMAKYLDTIYVSGWQCSSTASTSNEPSPDLADYPMDTVPNKVERLILRRQLFHDRKQREERLSVSKQERAKLPYTDFLRPIIADADTGHGGITAIIKLTKMFIERGAAGIHIEDQAPGTKKCGHMAGKVLVPVQEHINRLVAIRTSADLFQSDLIAVARTDSEAATLLTSTIDKRDHYFVIGATNPDIPDLIDVLTEAELQGKYGAELSQLEADWSKKAGLKLYHEAVFEAIDKSSSVKDKQAAKDKFSAKVGPLTGTSHKEAAKLAKEILGEEVFFDWEAPKVREGYYRYQGGTECAIMRARAYSPYADLVWMESKVPDYQEAVDFAKGVKTFTQTNWLAYNLSPSFNWNKAMSPDEQETYIKRLGKLGYNWQFITLAVLHTTALAVDNFSRDYQKIGMKAYGQQVQAKEIEDGIEIVKHQKWSGAEYIDGLLKLTTGGLSSTAAMGAGVTEDQFKDH</sequence>
<proteinExistence type="inferred from homology"/>
<dbReference type="EC" id="4.1.3.1" evidence="1"/>
<dbReference type="EC" id="4.1.3.30" evidence="1"/>
<dbReference type="EMBL" id="AJ272040">
    <property type="protein sequence ID" value="CAC34630.1"/>
    <property type="molecule type" value="Genomic_DNA"/>
</dbReference>
<dbReference type="SMR" id="Q9C124"/>
<dbReference type="UniPathway" id="UPA00703">
    <property type="reaction ID" value="UER00719"/>
</dbReference>
<dbReference type="GO" id="GO:0009514">
    <property type="term" value="C:glyoxysome"/>
    <property type="evidence" value="ECO:0007669"/>
    <property type="project" value="UniProtKB-SubCell"/>
</dbReference>
<dbReference type="GO" id="GO:0004451">
    <property type="term" value="F:isocitrate lyase activity"/>
    <property type="evidence" value="ECO:0007669"/>
    <property type="project" value="UniProtKB-EC"/>
</dbReference>
<dbReference type="GO" id="GO:0046872">
    <property type="term" value="F:metal ion binding"/>
    <property type="evidence" value="ECO:0007669"/>
    <property type="project" value="UniProtKB-KW"/>
</dbReference>
<dbReference type="GO" id="GO:0046421">
    <property type="term" value="F:methylisocitrate lyase activity"/>
    <property type="evidence" value="ECO:0007669"/>
    <property type="project" value="UniProtKB-EC"/>
</dbReference>
<dbReference type="GO" id="GO:0006097">
    <property type="term" value="P:glyoxylate cycle"/>
    <property type="evidence" value="ECO:0007669"/>
    <property type="project" value="UniProtKB-UniPathway"/>
</dbReference>
<dbReference type="GO" id="GO:0006099">
    <property type="term" value="P:tricarboxylic acid cycle"/>
    <property type="evidence" value="ECO:0007669"/>
    <property type="project" value="UniProtKB-KW"/>
</dbReference>
<dbReference type="CDD" id="cd00377">
    <property type="entry name" value="ICL_PEPM"/>
    <property type="match status" value="1"/>
</dbReference>
<dbReference type="FunFam" id="1.10.10.850:FF:000001">
    <property type="entry name" value="Isocitrate lyase"/>
    <property type="match status" value="1"/>
</dbReference>
<dbReference type="Gene3D" id="1.10.10.850">
    <property type="match status" value="1"/>
</dbReference>
<dbReference type="Gene3D" id="3.20.20.60">
    <property type="entry name" value="Phosphoenolpyruvate-binding domains"/>
    <property type="match status" value="1"/>
</dbReference>
<dbReference type="InterPro" id="IPR039556">
    <property type="entry name" value="ICL/PEPM"/>
</dbReference>
<dbReference type="InterPro" id="IPR006254">
    <property type="entry name" value="Isocitrate_lyase"/>
</dbReference>
<dbReference type="InterPro" id="IPR018523">
    <property type="entry name" value="Isocitrate_lyase_ph_CS"/>
</dbReference>
<dbReference type="InterPro" id="IPR015813">
    <property type="entry name" value="Pyrv/PenolPyrv_kinase-like_dom"/>
</dbReference>
<dbReference type="InterPro" id="IPR040442">
    <property type="entry name" value="Pyrv_kinase-like_dom_sf"/>
</dbReference>
<dbReference type="NCBIfam" id="TIGR01346">
    <property type="entry name" value="isocit_lyase"/>
    <property type="match status" value="1"/>
</dbReference>
<dbReference type="PANTHER" id="PTHR21631:SF3">
    <property type="entry name" value="BIFUNCTIONAL GLYOXYLATE CYCLE PROTEIN"/>
    <property type="match status" value="1"/>
</dbReference>
<dbReference type="PANTHER" id="PTHR21631">
    <property type="entry name" value="ISOCITRATE LYASE/MALATE SYNTHASE"/>
    <property type="match status" value="1"/>
</dbReference>
<dbReference type="Pfam" id="PF00463">
    <property type="entry name" value="ICL"/>
    <property type="match status" value="1"/>
</dbReference>
<dbReference type="PIRSF" id="PIRSF001362">
    <property type="entry name" value="Isocit_lyase"/>
    <property type="match status" value="1"/>
</dbReference>
<dbReference type="SUPFAM" id="SSF51621">
    <property type="entry name" value="Phosphoenolpyruvate/pyruvate domain"/>
    <property type="match status" value="1"/>
</dbReference>
<dbReference type="PROSITE" id="PS00161">
    <property type="entry name" value="ISOCITRATE_LYASE"/>
    <property type="match status" value="1"/>
</dbReference>
<keyword id="KW-0329">Glyoxylate bypass</keyword>
<keyword id="KW-0330">Glyoxysome</keyword>
<keyword id="KW-0456">Lyase</keyword>
<keyword id="KW-0460">Magnesium</keyword>
<keyword id="KW-0479">Metal-binding</keyword>
<keyword id="KW-0576">Peroxisome</keyword>
<keyword id="KW-0816">Tricarboxylic acid cycle</keyword>
<reference key="1">
    <citation type="submission" date="2001-03" db="EMBL/GenBank/DDBJ databases">
        <title>Isolation and characterization of the ICL gene from Pichia pastoris.</title>
        <authorList>
            <person name="Menendez J.D.D.J."/>
            <person name="Valdes I."/>
            <person name="Cabrera N."/>
        </authorList>
    </citation>
    <scope>NUCLEOTIDE SEQUENCE [GENOMIC DNA]</scope>
    <source>
        <strain>BKM 90</strain>
    </source>
</reference>
<feature type="chain" id="PRO_0000068797" description="Isocitrate lyase">
    <location>
        <begin position="1"/>
        <end position="550"/>
    </location>
</feature>
<feature type="active site" description="Proton acceptor" evidence="3">
    <location>
        <position position="213"/>
    </location>
</feature>
<feature type="binding site" evidence="3">
    <location>
        <begin position="103"/>
        <end position="105"/>
    </location>
    <ligand>
        <name>substrate</name>
    </ligand>
</feature>
<feature type="binding site" evidence="3">
    <location>
        <position position="175"/>
    </location>
    <ligand>
        <name>Mg(2+)</name>
        <dbReference type="ChEBI" id="CHEBI:18420"/>
    </ligand>
</feature>
<feature type="binding site" evidence="3">
    <location>
        <begin position="214"/>
        <end position="215"/>
    </location>
    <ligand>
        <name>substrate</name>
    </ligand>
</feature>
<feature type="binding site" evidence="3">
    <location>
        <position position="250"/>
    </location>
    <ligand>
        <name>substrate</name>
    </ligand>
</feature>
<feature type="binding site" evidence="3">
    <location>
        <begin position="434"/>
        <end position="438"/>
    </location>
    <ligand>
        <name>substrate</name>
    </ligand>
</feature>
<feature type="binding site" evidence="3">
    <location>
        <position position="468"/>
    </location>
    <ligand>
        <name>substrate</name>
    </ligand>
</feature>
<evidence type="ECO:0000250" key="1">
    <source>
        <dbReference type="UniProtKB" id="P28240"/>
    </source>
</evidence>
<evidence type="ECO:0000250" key="2">
    <source>
        <dbReference type="UniProtKB" id="P28299"/>
    </source>
</evidence>
<evidence type="ECO:0000250" key="3">
    <source>
        <dbReference type="UniProtKB" id="P9WKK7"/>
    </source>
</evidence>
<evidence type="ECO:0000305" key="4"/>
<accession>Q9C124</accession>
<gene>
    <name evidence="1" type="primary">ICL1</name>
</gene>
<comment type="function">
    <text evidence="1">Catalyzes the formation of succinate and glyoxylate from isocitrate, a key step of the glyoxylate cycle, which operates as an anaplerotic route for replenishing the tricarboxylic acid cycle. Required for growth on ethanol or acetate, but dispensable when fermentable carbon sources are available. Also acts on 2-methylisocitrate.</text>
</comment>
<comment type="catalytic activity">
    <reaction evidence="1">
        <text>D-threo-isocitrate = glyoxylate + succinate</text>
        <dbReference type="Rhea" id="RHEA:13245"/>
        <dbReference type="ChEBI" id="CHEBI:15562"/>
        <dbReference type="ChEBI" id="CHEBI:30031"/>
        <dbReference type="ChEBI" id="CHEBI:36655"/>
        <dbReference type="EC" id="4.1.3.1"/>
    </reaction>
</comment>
<comment type="catalytic activity">
    <reaction evidence="1">
        <text>(2S,3R)-3-hydroxybutane-1,2,3-tricarboxylate = pyruvate + succinate</text>
        <dbReference type="Rhea" id="RHEA:16809"/>
        <dbReference type="ChEBI" id="CHEBI:15361"/>
        <dbReference type="ChEBI" id="CHEBI:30031"/>
        <dbReference type="ChEBI" id="CHEBI:57429"/>
        <dbReference type="EC" id="4.1.3.30"/>
    </reaction>
</comment>
<comment type="cofactor">
    <cofactor evidence="3">
        <name>Mg(2+)</name>
        <dbReference type="ChEBI" id="CHEBI:18420"/>
    </cofactor>
</comment>
<comment type="pathway">
    <text>Carbohydrate metabolism; glyoxylate cycle; (S)-malate from isocitrate: step 1/2.</text>
</comment>
<comment type="subunit">
    <text evidence="1">Homotetramer.</text>
</comment>
<comment type="subcellular location">
    <subcellularLocation>
        <location evidence="2">Glyoxysome</location>
    </subcellularLocation>
</comment>
<comment type="similarity">
    <text evidence="4">Belongs to the isocitrate lyase/PEP mutase superfamily. Isocitrate lyase family.</text>
</comment>
<name>ACEA_PICPA</name>
<organism>
    <name type="scientific">Komagataella pastoris</name>
    <name type="common">Yeast</name>
    <name type="synonym">Pichia pastoris</name>
    <dbReference type="NCBI Taxonomy" id="4922"/>
    <lineage>
        <taxon>Eukaryota</taxon>
        <taxon>Fungi</taxon>
        <taxon>Dikarya</taxon>
        <taxon>Ascomycota</taxon>
        <taxon>Saccharomycotina</taxon>
        <taxon>Pichiomycetes</taxon>
        <taxon>Pichiales</taxon>
        <taxon>Pichiaceae</taxon>
        <taxon>Komagataella</taxon>
    </lineage>
</organism>